<gene>
    <name type="primary">Lypla2</name>
</gene>
<proteinExistence type="evidence at protein level"/>
<accession>Q9QYL8</accession>
<organism>
    <name type="scientific">Rattus norvegicus</name>
    <name type="common">Rat</name>
    <dbReference type="NCBI Taxonomy" id="10116"/>
    <lineage>
        <taxon>Eukaryota</taxon>
        <taxon>Metazoa</taxon>
        <taxon>Chordata</taxon>
        <taxon>Craniata</taxon>
        <taxon>Vertebrata</taxon>
        <taxon>Euteleostomi</taxon>
        <taxon>Mammalia</taxon>
        <taxon>Eutheria</taxon>
        <taxon>Euarchontoglires</taxon>
        <taxon>Glires</taxon>
        <taxon>Rodentia</taxon>
        <taxon>Myomorpha</taxon>
        <taxon>Muroidea</taxon>
        <taxon>Muridae</taxon>
        <taxon>Murinae</taxon>
        <taxon>Rattus</taxon>
    </lineage>
</organism>
<keyword id="KW-0963">Cytoplasm</keyword>
<keyword id="KW-0903">Direct protein sequencing</keyword>
<keyword id="KW-0276">Fatty acid metabolism</keyword>
<keyword id="KW-0378">Hydrolase</keyword>
<keyword id="KW-0443">Lipid metabolism</keyword>
<keyword id="KW-0449">Lipoprotein</keyword>
<keyword id="KW-0564">Palmitate</keyword>
<keyword id="KW-0597">Phosphoprotein</keyword>
<keyword id="KW-1185">Reference proteome</keyword>
<name>LYPA2_RAT</name>
<sequence length="231" mass="24807">MCGNNMSVPLLTDAATVSGAERETAAVIFLHGLGDTGHSWADALSTIRLPHVKYICPHAPRIPVTLNMKMVMPSWFDLMGLSPDAPEDEAGIKKAAENIKALIEHEMKNGIPANRIVLGGFSQGGALSLYTALTCPHPLAGIVALSCWLPLHRNFPQAANGSAKDLAILQCHGELDPMVPVRFGALTAEKLRTVVTPARVQFKTYPGVMHSSCPQEMAAVKEFLEKLLPPV</sequence>
<protein>
    <recommendedName>
        <fullName>Acyl-protein thioesterase 2</fullName>
        <shortName>APT-2</shortName>
        <ecNumber evidence="2">3.1.2.-</ecNumber>
    </recommendedName>
    <alternativeName>
        <fullName>Lysophospholipase 2</fullName>
    </alternativeName>
    <alternativeName>
        <fullName>Lysophospholipase II</fullName>
        <shortName>LPL-II</shortName>
        <shortName>LysoPLA II</shortName>
    </alternativeName>
    <alternativeName>
        <fullName evidence="4">Palmitoyl-protein hydrolase</fullName>
        <ecNumber evidence="2">3.1.2.22</ecNumber>
    </alternativeName>
</protein>
<feature type="chain" id="PRO_0000102273" description="Acyl-protein thioesterase 2">
    <location>
        <begin position="1"/>
        <end position="231"/>
    </location>
</feature>
<feature type="active site" description="Charge relay system" evidence="2">
    <location>
        <position position="122"/>
    </location>
</feature>
<feature type="active site" description="Charge relay system" evidence="1">
    <location>
        <position position="176"/>
    </location>
</feature>
<feature type="active site" description="Charge relay system" evidence="1">
    <location>
        <position position="210"/>
    </location>
</feature>
<feature type="modified residue" description="Phosphoserine" evidence="5">
    <location>
        <position position="82"/>
    </location>
</feature>
<feature type="lipid moiety-binding region" description="S-palmitoyl cysteine" evidence="2">
    <location>
        <position position="2"/>
    </location>
</feature>
<evidence type="ECO:0000250" key="1">
    <source>
        <dbReference type="UniProtKB" id="O75608"/>
    </source>
</evidence>
<evidence type="ECO:0000250" key="2">
    <source>
        <dbReference type="UniProtKB" id="O95372"/>
    </source>
</evidence>
<evidence type="ECO:0000250" key="3">
    <source>
        <dbReference type="UniProtKB" id="Q9WTL7"/>
    </source>
</evidence>
<evidence type="ECO:0000305" key="4"/>
<evidence type="ECO:0007744" key="5">
    <source>
    </source>
</evidence>
<reference key="1">
    <citation type="submission" date="1998-12" db="EMBL/GenBank/DDBJ databases">
        <title>Rat lysophospholipase II.</title>
        <authorList>
            <person name="Sugimoto H."/>
        </authorList>
    </citation>
    <scope>NUCLEOTIDE SEQUENCE [MRNA]</scope>
</reference>
<reference key="2">
    <citation type="journal article" date="2004" name="Genome Res.">
        <title>The status, quality, and expansion of the NIH full-length cDNA project: the Mammalian Gene Collection (MGC).</title>
        <authorList>
            <consortium name="The MGC Project Team"/>
        </authorList>
    </citation>
    <scope>NUCLEOTIDE SEQUENCE [LARGE SCALE MRNA]</scope>
    <source>
        <tissue>Lung</tissue>
    </source>
</reference>
<reference key="3">
    <citation type="submission" date="2007-04" db="UniProtKB">
        <authorList>
            <person name="Lubec G."/>
            <person name="Chen W.-Q."/>
        </authorList>
    </citation>
    <scope>PROTEIN SEQUENCE OF 165-190</scope>
    <scope>IDENTIFICATION BY MASS SPECTROMETRY</scope>
    <source>
        <strain>Sprague-Dawley</strain>
        <tissue>Hippocampus</tissue>
    </source>
</reference>
<reference key="4">
    <citation type="journal article" date="2012" name="Nat. Commun.">
        <title>Quantitative maps of protein phosphorylation sites across 14 different rat organs and tissues.</title>
        <authorList>
            <person name="Lundby A."/>
            <person name="Secher A."/>
            <person name="Lage K."/>
            <person name="Nordsborg N.B."/>
            <person name="Dmytriyev A."/>
            <person name="Lundby C."/>
            <person name="Olsen J.V."/>
        </authorList>
    </citation>
    <scope>PHOSPHORYLATION [LARGE SCALE ANALYSIS] AT SER-82</scope>
    <scope>IDENTIFICATION BY MASS SPECTROMETRY [LARGE SCALE ANALYSIS]</scope>
</reference>
<dbReference type="EC" id="3.1.2.-" evidence="2"/>
<dbReference type="EC" id="3.1.2.22" evidence="2"/>
<dbReference type="EMBL" id="AB021645">
    <property type="protein sequence ID" value="BAA87911.1"/>
    <property type="molecule type" value="mRNA"/>
</dbReference>
<dbReference type="EMBL" id="BC070503">
    <property type="protein sequence ID" value="AAH70503.1"/>
    <property type="molecule type" value="mRNA"/>
</dbReference>
<dbReference type="RefSeq" id="NP_001416047.1">
    <property type="nucleotide sequence ID" value="NM_001429118.1"/>
</dbReference>
<dbReference type="RefSeq" id="NP_112632.1">
    <property type="nucleotide sequence ID" value="NM_031342.2"/>
</dbReference>
<dbReference type="SMR" id="Q9QYL8"/>
<dbReference type="FunCoup" id="Q9QYL8">
    <property type="interactions" value="2949"/>
</dbReference>
<dbReference type="STRING" id="10116.ENSRNOP00000014415"/>
<dbReference type="ChEMBL" id="CHEMBL3784905"/>
<dbReference type="ESTHER" id="ratno-lypla2">
    <property type="family name" value="LYsophospholipase_carboxylesterase"/>
</dbReference>
<dbReference type="GlyGen" id="Q9QYL8">
    <property type="glycosylation" value="1 site"/>
</dbReference>
<dbReference type="iPTMnet" id="Q9QYL8"/>
<dbReference type="PhosphoSitePlus" id="Q9QYL8"/>
<dbReference type="SwissPalm" id="Q9QYL8"/>
<dbReference type="jPOST" id="Q9QYL8"/>
<dbReference type="PaxDb" id="10116-ENSRNOP00000014415"/>
<dbReference type="Ensembl" id="ENSRNOT00000014415.6">
    <property type="protein sequence ID" value="ENSRNOP00000014415.3"/>
    <property type="gene ID" value="ENSRNOG00000010067.6"/>
</dbReference>
<dbReference type="GeneID" id="83510"/>
<dbReference type="KEGG" id="rno:83510"/>
<dbReference type="UCSC" id="RGD:620210">
    <property type="organism name" value="rat"/>
</dbReference>
<dbReference type="AGR" id="RGD:620210"/>
<dbReference type="CTD" id="11313"/>
<dbReference type="RGD" id="620210">
    <property type="gene designation" value="Lypla2"/>
</dbReference>
<dbReference type="eggNOG" id="KOG2112">
    <property type="taxonomic scope" value="Eukaryota"/>
</dbReference>
<dbReference type="GeneTree" id="ENSGT00940000156197"/>
<dbReference type="HOGENOM" id="CLU_049413_3_5_1"/>
<dbReference type="InParanoid" id="Q9QYL8"/>
<dbReference type="OrthoDB" id="3226at9989"/>
<dbReference type="PhylomeDB" id="Q9QYL8"/>
<dbReference type="TreeFam" id="TF314619"/>
<dbReference type="Reactome" id="R-RNO-373760">
    <property type="pathway name" value="L1CAM interactions"/>
</dbReference>
<dbReference type="PRO" id="PR:Q9QYL8"/>
<dbReference type="Proteomes" id="UP000002494">
    <property type="component" value="Chromosome 5"/>
</dbReference>
<dbReference type="Bgee" id="ENSRNOG00000010067">
    <property type="expression patterns" value="Expressed in thymus and 20 other cell types or tissues"/>
</dbReference>
<dbReference type="GO" id="GO:0005737">
    <property type="term" value="C:cytoplasm"/>
    <property type="evidence" value="ECO:0000266"/>
    <property type="project" value="RGD"/>
</dbReference>
<dbReference type="GO" id="GO:0005829">
    <property type="term" value="C:cytosol"/>
    <property type="evidence" value="ECO:0000266"/>
    <property type="project" value="RGD"/>
</dbReference>
<dbReference type="GO" id="GO:0005795">
    <property type="term" value="C:Golgi stack"/>
    <property type="evidence" value="ECO:0000266"/>
    <property type="project" value="RGD"/>
</dbReference>
<dbReference type="GO" id="GO:0052689">
    <property type="term" value="F:carboxylic ester hydrolase activity"/>
    <property type="evidence" value="ECO:0000318"/>
    <property type="project" value="GO_Central"/>
</dbReference>
<dbReference type="GO" id="GO:0004622">
    <property type="term" value="F:lysophospholipase activity"/>
    <property type="evidence" value="ECO:0000250"/>
    <property type="project" value="UniProtKB"/>
</dbReference>
<dbReference type="GO" id="GO:0008474">
    <property type="term" value="F:palmitoyl-(protein) hydrolase activity"/>
    <property type="evidence" value="ECO:0000250"/>
    <property type="project" value="UniProtKB"/>
</dbReference>
<dbReference type="GO" id="GO:0046464">
    <property type="term" value="P:acylglycerol catabolic process"/>
    <property type="evidence" value="ECO:0000250"/>
    <property type="project" value="UniProtKB"/>
</dbReference>
<dbReference type="GO" id="GO:0006631">
    <property type="term" value="P:fatty acid metabolic process"/>
    <property type="evidence" value="ECO:0007669"/>
    <property type="project" value="UniProtKB-KW"/>
</dbReference>
<dbReference type="GO" id="GO:1905344">
    <property type="term" value="P:prostaglandin catabolic process"/>
    <property type="evidence" value="ECO:0000250"/>
    <property type="project" value="UniProtKB"/>
</dbReference>
<dbReference type="GO" id="GO:0002084">
    <property type="term" value="P:protein depalmitoylation"/>
    <property type="evidence" value="ECO:0000250"/>
    <property type="project" value="UniProtKB"/>
</dbReference>
<dbReference type="FunFam" id="3.40.50.1820:FF:000010">
    <property type="entry name" value="Acyl-protein thioesterase 2"/>
    <property type="match status" value="1"/>
</dbReference>
<dbReference type="Gene3D" id="3.40.50.1820">
    <property type="entry name" value="alpha/beta hydrolase"/>
    <property type="match status" value="1"/>
</dbReference>
<dbReference type="InterPro" id="IPR029058">
    <property type="entry name" value="AB_hydrolase_fold"/>
</dbReference>
<dbReference type="InterPro" id="IPR050565">
    <property type="entry name" value="LYPA1-2/EST-like"/>
</dbReference>
<dbReference type="InterPro" id="IPR003140">
    <property type="entry name" value="PLipase/COase/thioEstase"/>
</dbReference>
<dbReference type="PANTHER" id="PTHR10655:SF13">
    <property type="entry name" value="ACYL-PROTEIN THIOESTERASE 2"/>
    <property type="match status" value="1"/>
</dbReference>
<dbReference type="PANTHER" id="PTHR10655">
    <property type="entry name" value="LYSOPHOSPHOLIPASE-RELATED"/>
    <property type="match status" value="1"/>
</dbReference>
<dbReference type="Pfam" id="PF02230">
    <property type="entry name" value="Abhydrolase_2"/>
    <property type="match status" value="1"/>
</dbReference>
<dbReference type="SUPFAM" id="SSF53474">
    <property type="entry name" value="alpha/beta-Hydrolases"/>
    <property type="match status" value="1"/>
</dbReference>
<comment type="function">
    <text evidence="2 3">Acts as an acyl-protein thioesterase hydrolyzing fatty acids from S-acylated cysteine residues in proteins such as trimeric G alpha proteins, GSDMD, GAP43, ZDHHC6 or HRAS (By similarity). Deacylates GAP43 (By similarity). Mediates depalmitoylation of ZDHHC6 (By similarity). Has lysophospholipase activity (By similarity). Hydrolyzes prostaglandin glycerol esters (PG-Gs) in the following order prostaglandin D2-glycerol ester (PGD2-G) &gt; prostaglandin E2 glycerol ester (PGE2-G) &gt; prostaglandin F2-alpha-glycerol ester (PGF2-alpha-G) (By similarity). Hydrolyzes 1-arachidonoylglycerol but not 2-arachidonoylglycerol or arachidonoylethanolamide (By similarity).</text>
</comment>
<comment type="catalytic activity">
    <reaction evidence="2">
        <text>S-hexadecanoyl-L-cysteinyl-[protein] + H2O = L-cysteinyl-[protein] + hexadecanoate + H(+)</text>
        <dbReference type="Rhea" id="RHEA:19233"/>
        <dbReference type="Rhea" id="RHEA-COMP:10131"/>
        <dbReference type="Rhea" id="RHEA-COMP:11032"/>
        <dbReference type="ChEBI" id="CHEBI:7896"/>
        <dbReference type="ChEBI" id="CHEBI:15377"/>
        <dbReference type="ChEBI" id="CHEBI:15378"/>
        <dbReference type="ChEBI" id="CHEBI:29950"/>
        <dbReference type="ChEBI" id="CHEBI:74151"/>
        <dbReference type="EC" id="3.1.2.22"/>
    </reaction>
</comment>
<comment type="catalytic activity">
    <reaction evidence="2">
        <text>prostaglandin E2 1-glyceryl ester + H2O = prostaglandin E2 + glycerol + H(+)</text>
        <dbReference type="Rhea" id="RHEA:48296"/>
        <dbReference type="ChEBI" id="CHEBI:15377"/>
        <dbReference type="ChEBI" id="CHEBI:15378"/>
        <dbReference type="ChEBI" id="CHEBI:17754"/>
        <dbReference type="ChEBI" id="CHEBI:90230"/>
        <dbReference type="ChEBI" id="CHEBI:606564"/>
    </reaction>
    <physiologicalReaction direction="left-to-right" evidence="2">
        <dbReference type="Rhea" id="RHEA:48297"/>
    </physiologicalReaction>
</comment>
<comment type="catalytic activity">
    <reaction evidence="2">
        <text>1-hexadecanoyl-sn-glycero-3-phosphocholine + H2O = sn-glycerol 3-phosphocholine + hexadecanoate + H(+)</text>
        <dbReference type="Rhea" id="RHEA:40435"/>
        <dbReference type="ChEBI" id="CHEBI:7896"/>
        <dbReference type="ChEBI" id="CHEBI:15377"/>
        <dbReference type="ChEBI" id="CHEBI:15378"/>
        <dbReference type="ChEBI" id="CHEBI:16870"/>
        <dbReference type="ChEBI" id="CHEBI:72998"/>
    </reaction>
    <physiologicalReaction direction="left-to-right" evidence="2">
        <dbReference type="Rhea" id="RHEA:40436"/>
    </physiologicalReaction>
</comment>
<comment type="catalytic activity">
    <reaction evidence="2">
        <text>1-octadecanoyl-sn-glycero-3-phosphocholine + H2O = octadecanoate + sn-glycerol 3-phosphocholine + H(+)</text>
        <dbReference type="Rhea" id="RHEA:40887"/>
        <dbReference type="ChEBI" id="CHEBI:15377"/>
        <dbReference type="ChEBI" id="CHEBI:15378"/>
        <dbReference type="ChEBI" id="CHEBI:16870"/>
        <dbReference type="ChEBI" id="CHEBI:25629"/>
        <dbReference type="ChEBI" id="CHEBI:73858"/>
    </reaction>
    <physiologicalReaction direction="left-to-right" evidence="2">
        <dbReference type="Rhea" id="RHEA:40888"/>
    </physiologicalReaction>
</comment>
<comment type="catalytic activity">
    <reaction evidence="2">
        <text>1-hexadecanoyl-sn-glycero-3-phosphate + H2O = sn-glycerol 3-phosphate + hexadecanoate + H(+)</text>
        <dbReference type="Rhea" id="RHEA:49092"/>
        <dbReference type="ChEBI" id="CHEBI:7896"/>
        <dbReference type="ChEBI" id="CHEBI:15377"/>
        <dbReference type="ChEBI" id="CHEBI:15378"/>
        <dbReference type="ChEBI" id="CHEBI:57518"/>
        <dbReference type="ChEBI" id="CHEBI:57597"/>
    </reaction>
    <physiologicalReaction direction="left-to-right" evidence="2">
        <dbReference type="Rhea" id="RHEA:49093"/>
    </physiologicalReaction>
</comment>
<comment type="catalytic activity">
    <reaction evidence="2">
        <text>1-hexadecanoyl-sn-glycero-3-phospho-L-serine + H2O = sn-glycero-3-phospho-L-serine + hexadecanoate + H(+)</text>
        <dbReference type="Rhea" id="RHEA:44552"/>
        <dbReference type="ChEBI" id="CHEBI:7896"/>
        <dbReference type="ChEBI" id="CHEBI:15377"/>
        <dbReference type="ChEBI" id="CHEBI:15378"/>
        <dbReference type="ChEBI" id="CHEBI:64765"/>
        <dbReference type="ChEBI" id="CHEBI:75020"/>
    </reaction>
    <physiologicalReaction direction="left-to-right" evidence="2">
        <dbReference type="Rhea" id="RHEA:44553"/>
    </physiologicalReaction>
</comment>
<comment type="subcellular location">
    <subcellularLocation>
        <location evidence="2">Cytoplasm</location>
    </subcellularLocation>
</comment>
<comment type="similarity">
    <text evidence="4">Belongs to the AB hydrolase superfamily. AB hydrolase 2 family.</text>
</comment>